<protein>
    <recommendedName>
        <fullName evidence="1">Thymidylate synthase</fullName>
        <shortName evidence="1">TS</shortName>
        <shortName evidence="1">TSase</shortName>
        <ecNumber evidence="1">2.1.1.45</ecNumber>
    </recommendedName>
</protein>
<keyword id="KW-0963">Cytoplasm</keyword>
<keyword id="KW-0489">Methyltransferase</keyword>
<keyword id="KW-0545">Nucleotide biosynthesis</keyword>
<keyword id="KW-1185">Reference proteome</keyword>
<keyword id="KW-0808">Transferase</keyword>
<comment type="function">
    <text evidence="1">Catalyzes the reductive methylation of 2'-deoxyuridine-5'-monophosphate (dUMP) to 2'-deoxythymidine-5'-monophosphate (dTMP) while utilizing 5,10-methylenetetrahydrofolate (mTHF) as the methyl donor and reductant in the reaction, yielding dihydrofolate (DHF) as a by-product. This enzymatic reaction provides an intracellular de novo source of dTMP, an essential precursor for DNA biosynthesis.</text>
</comment>
<comment type="catalytic activity">
    <reaction evidence="1">
        <text>dUMP + (6R)-5,10-methylene-5,6,7,8-tetrahydrofolate = 7,8-dihydrofolate + dTMP</text>
        <dbReference type="Rhea" id="RHEA:12104"/>
        <dbReference type="ChEBI" id="CHEBI:15636"/>
        <dbReference type="ChEBI" id="CHEBI:57451"/>
        <dbReference type="ChEBI" id="CHEBI:63528"/>
        <dbReference type="ChEBI" id="CHEBI:246422"/>
        <dbReference type="EC" id="2.1.1.45"/>
    </reaction>
</comment>
<comment type="pathway">
    <text evidence="1">Pyrimidine metabolism; dTTP biosynthesis.</text>
</comment>
<comment type="subunit">
    <text evidence="1">Homodimer.</text>
</comment>
<comment type="subcellular location">
    <subcellularLocation>
        <location evidence="1">Cytoplasm</location>
    </subcellularLocation>
</comment>
<comment type="similarity">
    <text evidence="1">Belongs to the thymidylate synthase family. Bacterial-type ThyA subfamily.</text>
</comment>
<sequence length="264" mass="30480">MKQYLELMQKVLDEGTQKNDRTGTGTLSIFGHQMRFNLQDGFPLVTTKRCHLRSIIHELLWFLQGDTNIAYLHENNVTIWDEWADENGDLGPVYGKQWRAWPTPDGRHIDQITTVLNQLKNDPDSRRIIVSAWNVGELDKMALAPCHAFFQFYVADGKLSCQLYQRSCDVFLGLPFNIASYALLVHMMAQQCDLEVGDFVWTGGDTHLYSNHMDQTHLQLSREPRPLPKLIIKRKPESIFDYRFEDFEIEGYDPHPGIKAPVAI</sequence>
<organism>
    <name type="scientific">Escherichia coli O127:H6 (strain E2348/69 / EPEC)</name>
    <dbReference type="NCBI Taxonomy" id="574521"/>
    <lineage>
        <taxon>Bacteria</taxon>
        <taxon>Pseudomonadati</taxon>
        <taxon>Pseudomonadota</taxon>
        <taxon>Gammaproteobacteria</taxon>
        <taxon>Enterobacterales</taxon>
        <taxon>Enterobacteriaceae</taxon>
        <taxon>Escherichia</taxon>
    </lineage>
</organism>
<name>TYSY_ECO27</name>
<feature type="chain" id="PRO_1000197241" description="Thymidylate synthase">
    <location>
        <begin position="1"/>
        <end position="264"/>
    </location>
</feature>
<feature type="active site" description="Nucleophile" evidence="1">
    <location>
        <position position="146"/>
    </location>
</feature>
<feature type="binding site" description="in other chain" evidence="1">
    <location>
        <position position="21"/>
    </location>
    <ligand>
        <name>dUMP</name>
        <dbReference type="ChEBI" id="CHEBI:246422"/>
        <note>ligand shared between dimeric partners</note>
    </ligand>
</feature>
<feature type="binding site" evidence="1">
    <location>
        <position position="51"/>
    </location>
    <ligand>
        <name>(6R)-5,10-methylene-5,6,7,8-tetrahydrofolate</name>
        <dbReference type="ChEBI" id="CHEBI:15636"/>
    </ligand>
</feature>
<feature type="binding site" evidence="1">
    <location>
        <begin position="126"/>
        <end position="127"/>
    </location>
    <ligand>
        <name>dUMP</name>
        <dbReference type="ChEBI" id="CHEBI:246422"/>
        <note>ligand shared between dimeric partners</note>
    </ligand>
</feature>
<feature type="binding site" description="in other chain" evidence="1">
    <location>
        <begin position="166"/>
        <end position="169"/>
    </location>
    <ligand>
        <name>dUMP</name>
        <dbReference type="ChEBI" id="CHEBI:246422"/>
        <note>ligand shared between dimeric partners</note>
    </ligand>
</feature>
<feature type="binding site" evidence="1">
    <location>
        <position position="169"/>
    </location>
    <ligand>
        <name>(6R)-5,10-methylene-5,6,7,8-tetrahydrofolate</name>
        <dbReference type="ChEBI" id="CHEBI:15636"/>
    </ligand>
</feature>
<feature type="binding site" description="in other chain" evidence="1">
    <location>
        <position position="177"/>
    </location>
    <ligand>
        <name>dUMP</name>
        <dbReference type="ChEBI" id="CHEBI:246422"/>
        <note>ligand shared between dimeric partners</note>
    </ligand>
</feature>
<feature type="binding site" description="in other chain" evidence="1">
    <location>
        <begin position="207"/>
        <end position="209"/>
    </location>
    <ligand>
        <name>dUMP</name>
        <dbReference type="ChEBI" id="CHEBI:246422"/>
        <note>ligand shared between dimeric partners</note>
    </ligand>
</feature>
<feature type="binding site" evidence="1">
    <location>
        <position position="263"/>
    </location>
    <ligand>
        <name>(6R)-5,10-methylene-5,6,7,8-tetrahydrofolate</name>
        <dbReference type="ChEBI" id="CHEBI:15636"/>
    </ligand>
</feature>
<gene>
    <name evidence="1" type="primary">thyA</name>
    <name type="ordered locus">E2348C_3096</name>
</gene>
<proteinExistence type="inferred from homology"/>
<reference key="1">
    <citation type="journal article" date="2009" name="J. Bacteriol.">
        <title>Complete genome sequence and comparative genome analysis of enteropathogenic Escherichia coli O127:H6 strain E2348/69.</title>
        <authorList>
            <person name="Iguchi A."/>
            <person name="Thomson N.R."/>
            <person name="Ogura Y."/>
            <person name="Saunders D."/>
            <person name="Ooka T."/>
            <person name="Henderson I.R."/>
            <person name="Harris D."/>
            <person name="Asadulghani M."/>
            <person name="Kurokawa K."/>
            <person name="Dean P."/>
            <person name="Kenny B."/>
            <person name="Quail M.A."/>
            <person name="Thurston S."/>
            <person name="Dougan G."/>
            <person name="Hayashi T."/>
            <person name="Parkhill J."/>
            <person name="Frankel G."/>
        </authorList>
    </citation>
    <scope>NUCLEOTIDE SEQUENCE [LARGE SCALE GENOMIC DNA]</scope>
    <source>
        <strain>E2348/69 / EPEC</strain>
    </source>
</reference>
<evidence type="ECO:0000255" key="1">
    <source>
        <dbReference type="HAMAP-Rule" id="MF_00008"/>
    </source>
</evidence>
<accession>B7UHP4</accession>
<dbReference type="EC" id="2.1.1.45" evidence="1"/>
<dbReference type="EMBL" id="FM180568">
    <property type="protein sequence ID" value="CAS10644.1"/>
    <property type="molecule type" value="Genomic_DNA"/>
</dbReference>
<dbReference type="RefSeq" id="WP_000816232.1">
    <property type="nucleotide sequence ID" value="NC_011601.1"/>
</dbReference>
<dbReference type="SMR" id="B7UHP4"/>
<dbReference type="GeneID" id="93779171"/>
<dbReference type="KEGG" id="ecg:E2348C_3096"/>
<dbReference type="HOGENOM" id="CLU_021669_0_0_6"/>
<dbReference type="UniPathway" id="UPA00575"/>
<dbReference type="Proteomes" id="UP000008205">
    <property type="component" value="Chromosome"/>
</dbReference>
<dbReference type="GO" id="GO:0005829">
    <property type="term" value="C:cytosol"/>
    <property type="evidence" value="ECO:0007669"/>
    <property type="project" value="TreeGrafter"/>
</dbReference>
<dbReference type="GO" id="GO:0004799">
    <property type="term" value="F:thymidylate synthase activity"/>
    <property type="evidence" value="ECO:0007669"/>
    <property type="project" value="UniProtKB-UniRule"/>
</dbReference>
<dbReference type="GO" id="GO:0006231">
    <property type="term" value="P:dTMP biosynthetic process"/>
    <property type="evidence" value="ECO:0007669"/>
    <property type="project" value="UniProtKB-UniRule"/>
</dbReference>
<dbReference type="GO" id="GO:0006235">
    <property type="term" value="P:dTTP biosynthetic process"/>
    <property type="evidence" value="ECO:0007669"/>
    <property type="project" value="UniProtKB-UniRule"/>
</dbReference>
<dbReference type="GO" id="GO:0032259">
    <property type="term" value="P:methylation"/>
    <property type="evidence" value="ECO:0007669"/>
    <property type="project" value="UniProtKB-KW"/>
</dbReference>
<dbReference type="CDD" id="cd00351">
    <property type="entry name" value="TS_Pyrimidine_HMase"/>
    <property type="match status" value="1"/>
</dbReference>
<dbReference type="FunFam" id="3.30.572.10:FF:000001">
    <property type="entry name" value="Thymidylate synthase"/>
    <property type="match status" value="1"/>
</dbReference>
<dbReference type="Gene3D" id="3.30.572.10">
    <property type="entry name" value="Thymidylate synthase/dCMP hydroxymethylase domain"/>
    <property type="match status" value="1"/>
</dbReference>
<dbReference type="HAMAP" id="MF_00008">
    <property type="entry name" value="Thymidy_synth_bact"/>
    <property type="match status" value="1"/>
</dbReference>
<dbReference type="InterPro" id="IPR045097">
    <property type="entry name" value="Thymidate_synth/dCMP_Mease"/>
</dbReference>
<dbReference type="InterPro" id="IPR023451">
    <property type="entry name" value="Thymidate_synth/dCMP_Mease_dom"/>
</dbReference>
<dbReference type="InterPro" id="IPR036926">
    <property type="entry name" value="Thymidate_synth/dCMP_Mease_sf"/>
</dbReference>
<dbReference type="InterPro" id="IPR000398">
    <property type="entry name" value="Thymidylate_synthase"/>
</dbReference>
<dbReference type="InterPro" id="IPR020940">
    <property type="entry name" value="Thymidylate_synthase_AS"/>
</dbReference>
<dbReference type="NCBIfam" id="NF002497">
    <property type="entry name" value="PRK01827.1-3"/>
    <property type="match status" value="1"/>
</dbReference>
<dbReference type="NCBIfam" id="NF002499">
    <property type="entry name" value="PRK01827.1-5"/>
    <property type="match status" value="1"/>
</dbReference>
<dbReference type="NCBIfam" id="TIGR03284">
    <property type="entry name" value="thym_sym"/>
    <property type="match status" value="2"/>
</dbReference>
<dbReference type="PANTHER" id="PTHR11548:SF9">
    <property type="entry name" value="THYMIDYLATE SYNTHASE"/>
    <property type="match status" value="1"/>
</dbReference>
<dbReference type="PANTHER" id="PTHR11548">
    <property type="entry name" value="THYMIDYLATE SYNTHASE 1"/>
    <property type="match status" value="1"/>
</dbReference>
<dbReference type="Pfam" id="PF00303">
    <property type="entry name" value="Thymidylat_synt"/>
    <property type="match status" value="1"/>
</dbReference>
<dbReference type="PRINTS" id="PR00108">
    <property type="entry name" value="THYMDSNTHASE"/>
</dbReference>
<dbReference type="SUPFAM" id="SSF55831">
    <property type="entry name" value="Thymidylate synthase/dCMP hydroxymethylase"/>
    <property type="match status" value="1"/>
</dbReference>
<dbReference type="PROSITE" id="PS00091">
    <property type="entry name" value="THYMIDYLATE_SYNTHASE"/>
    <property type="match status" value="1"/>
</dbReference>